<evidence type="ECO:0000250" key="1">
    <source>
        <dbReference type="UniProtKB" id="P0CI24"/>
    </source>
</evidence>
<evidence type="ECO:0000255" key="2"/>
<evidence type="ECO:0000269" key="3">
    <source>
    </source>
</evidence>
<evidence type="ECO:0000305" key="4"/>
<keyword id="KW-0027">Amidation</keyword>
<keyword id="KW-0903">Direct protein sequencing</keyword>
<keyword id="KW-1015">Disulfide bond</keyword>
<keyword id="KW-0379">Hydroxylation</keyword>
<keyword id="KW-0528">Neurotoxin</keyword>
<keyword id="KW-0964">Secreted</keyword>
<keyword id="KW-0732">Signal</keyword>
<keyword id="KW-0800">Toxin</keyword>
<accession>P0C1N5</accession>
<proteinExistence type="evidence at protein level"/>
<protein>
    <recommendedName>
        <fullName>Conotoxin mr3g</fullName>
    </recommendedName>
    <alternativeName>
        <fullName>Mr3.6</fullName>
    </alternativeName>
</protein>
<name>M3G_CONMR</name>
<feature type="signal peptide" evidence="2">
    <location>
        <begin position="1"/>
        <end position="19"/>
    </location>
</feature>
<feature type="propeptide" id="PRO_0000246047" evidence="3">
    <location>
        <begin position="20"/>
        <end position="51"/>
    </location>
</feature>
<feature type="peptide" id="PRO_0000246048" description="Conotoxin mr3g">
    <location>
        <begin position="52"/>
        <end position="67"/>
    </location>
</feature>
<feature type="modified residue" description="4-hydroxyproline" evidence="3">
    <location>
        <position position="55"/>
    </location>
</feature>
<feature type="modified residue" description="4-hydroxyproline" evidence="3">
    <location>
        <position position="65"/>
    </location>
</feature>
<feature type="modified residue" description="Cysteine amide" evidence="3">
    <location>
        <position position="67"/>
    </location>
</feature>
<feature type="disulfide bond" evidence="1">
    <location>
        <begin position="53"/>
        <end position="67"/>
    </location>
</feature>
<feature type="disulfide bond" evidence="1">
    <location>
        <begin position="54"/>
        <end position="63"/>
    </location>
</feature>
<feature type="disulfide bond" evidence="1">
    <location>
        <begin position="59"/>
        <end position="66"/>
    </location>
</feature>
<comment type="function">
    <text>Intracranially injection into mice does not elicit symptoms.</text>
</comment>
<comment type="subcellular location">
    <subcellularLocation>
        <location>Secreted</location>
    </subcellularLocation>
</comment>
<comment type="tissue specificity">
    <text>Expressed by the venom duct.</text>
</comment>
<comment type="domain">
    <text>The cysteine framework is III (CC-C-C-CC). Classified in the M-2 branch, since 2 residues stand between the fourth and the fifth cysteine residues.</text>
</comment>
<comment type="mass spectrometry" mass="1666.4" method="Electrospray" evidence="3"/>
<comment type="similarity">
    <text evidence="4">Belongs to the conotoxin M superfamily.</text>
</comment>
<sequence length="68" mass="7337">MSKLGVLLTICLLLFALTAVPLDGDQPADRPAERMQDDISSERHPMFDAVRDCCPLPACPFGCNPCCG</sequence>
<organism>
    <name type="scientific">Conus marmoreus</name>
    <name type="common">Marble cone</name>
    <dbReference type="NCBI Taxonomy" id="42752"/>
    <lineage>
        <taxon>Eukaryota</taxon>
        <taxon>Metazoa</taxon>
        <taxon>Spiralia</taxon>
        <taxon>Lophotrochozoa</taxon>
        <taxon>Mollusca</taxon>
        <taxon>Gastropoda</taxon>
        <taxon>Caenogastropoda</taxon>
        <taxon>Neogastropoda</taxon>
        <taxon>Conoidea</taxon>
        <taxon>Conidae</taxon>
        <taxon>Conus</taxon>
    </lineage>
</organism>
<dbReference type="ConoServer" id="1466">
    <property type="toxin name" value="MrIIIG precursor"/>
</dbReference>
<dbReference type="GO" id="GO:0005576">
    <property type="term" value="C:extracellular region"/>
    <property type="evidence" value="ECO:0007669"/>
    <property type="project" value="UniProtKB-SubCell"/>
</dbReference>
<dbReference type="GO" id="GO:0008200">
    <property type="term" value="F:ion channel inhibitor activity"/>
    <property type="evidence" value="ECO:0007669"/>
    <property type="project" value="InterPro"/>
</dbReference>
<dbReference type="GO" id="GO:0090729">
    <property type="term" value="F:toxin activity"/>
    <property type="evidence" value="ECO:0007669"/>
    <property type="project" value="UniProtKB-KW"/>
</dbReference>
<dbReference type="InterPro" id="IPR004214">
    <property type="entry name" value="Conotoxin"/>
</dbReference>
<dbReference type="Pfam" id="PF02950">
    <property type="entry name" value="Conotoxin"/>
    <property type="match status" value="1"/>
</dbReference>
<reference key="1">
    <citation type="journal article" date="2005" name="Biochemistry">
        <title>Definition of the M-conotoxin superfamily: characterization of novel peptides from molluscivorous Conus venoms.</title>
        <authorList>
            <person name="Corpuz G.P."/>
            <person name="Jacobsen R.B."/>
            <person name="Jimenez E.C."/>
            <person name="Watkins M."/>
            <person name="Walker C."/>
            <person name="Colledge C."/>
            <person name="Garrett J.E."/>
            <person name="McDougal O."/>
            <person name="Li W."/>
            <person name="Gray W.R."/>
            <person name="Hillyard D.R."/>
            <person name="Rivier J."/>
            <person name="McIntosh J.M."/>
            <person name="Cruz L.J."/>
            <person name="Olivera B.M."/>
        </authorList>
    </citation>
    <scope>NUCLEOTIDE SEQUENCE [MRNA]</scope>
    <source>
        <tissue>Venom duct</tissue>
    </source>
</reference>
<reference key="2">
    <citation type="journal article" date="2006" name="FEBS J.">
        <title>Characterization of novel M-superfamily conotoxins with new disulfide linkage.</title>
        <authorList>
            <person name="Han Y.-H."/>
            <person name="Wang Q."/>
            <person name="Jiang H."/>
            <person name="Liu L."/>
            <person name="Xiao C."/>
            <person name="Yuan D.-D."/>
            <person name="Shao X.-X."/>
            <person name="Dai Q.-Y."/>
            <person name="Cheng J.-S."/>
            <person name="Chi C.-W."/>
        </authorList>
    </citation>
    <scope>PROTEIN SEQUENCE OF 52-67</scope>
    <scope>HYDROXYLATION AT PRO-55 AND PRO-65</scope>
    <scope>AMIDATION AT CYS-67</scope>
    <scope>MASS SPECTROMETRY</scope>
    <scope>BIOASSAY</scope>
    <source>
        <tissue>Venom</tissue>
    </source>
</reference>